<sequence>MKTGALATFLALCLPVTVFATTLRLSNEVDLLVLDGKKVSSSLLRGAESIELENGPHQLVFRVEKTIRLPGNEERLYISPPLVISFDTQLISQVNFQLPRLENEREASHFNAAPRLALLDGDAMPIPVKLDILAITSTAKVVDYEIETERYNKSAKRASLPQFATMMADDSTLLSDVSELDTVPPQSQTLTEQRLKYWFRLADPQTRHHFLQWAEKQPPS</sequence>
<reference key="1">
    <citation type="journal article" date="2008" name="Genome Res.">
        <title>Comparative genome analysis of Salmonella enteritidis PT4 and Salmonella gallinarum 287/91 provides insights into evolutionary and host adaptation pathways.</title>
        <authorList>
            <person name="Thomson N.R."/>
            <person name="Clayton D.J."/>
            <person name="Windhorst D."/>
            <person name="Vernikos G."/>
            <person name="Davidson S."/>
            <person name="Churcher C."/>
            <person name="Quail M.A."/>
            <person name="Stevens M."/>
            <person name="Jones M.A."/>
            <person name="Watson M."/>
            <person name="Barron A."/>
            <person name="Layton A."/>
            <person name="Pickard D."/>
            <person name="Kingsley R.A."/>
            <person name="Bignell A."/>
            <person name="Clark L."/>
            <person name="Harris B."/>
            <person name="Ormond D."/>
            <person name="Abdellah Z."/>
            <person name="Brooks K."/>
            <person name="Cherevach I."/>
            <person name="Chillingworth T."/>
            <person name="Woodward J."/>
            <person name="Norberczak H."/>
            <person name="Lord A."/>
            <person name="Arrowsmith C."/>
            <person name="Jagels K."/>
            <person name="Moule S."/>
            <person name="Mungall K."/>
            <person name="Saunders M."/>
            <person name="Whitehead S."/>
            <person name="Chabalgoity J.A."/>
            <person name="Maskell D."/>
            <person name="Humphreys T."/>
            <person name="Roberts M."/>
            <person name="Barrow P.A."/>
            <person name="Dougan G."/>
            <person name="Parkhill J."/>
        </authorList>
    </citation>
    <scope>NUCLEOTIDE SEQUENCE [LARGE SCALE GENOMIC DNA]</scope>
    <source>
        <strain>P125109</strain>
    </source>
</reference>
<organism>
    <name type="scientific">Salmonella enteritidis PT4 (strain P125109)</name>
    <dbReference type="NCBI Taxonomy" id="550537"/>
    <lineage>
        <taxon>Bacteria</taxon>
        <taxon>Pseudomonadati</taxon>
        <taxon>Pseudomonadota</taxon>
        <taxon>Gammaproteobacteria</taxon>
        <taxon>Enterobacterales</taxon>
        <taxon>Enterobacteriaceae</taxon>
        <taxon>Salmonella</taxon>
    </lineage>
</organism>
<comment type="similarity">
    <text evidence="1">Belongs to the UPF0319 family.</text>
</comment>
<evidence type="ECO:0000255" key="1">
    <source>
        <dbReference type="HAMAP-Rule" id="MF_00789"/>
    </source>
</evidence>
<keyword id="KW-0732">Signal</keyword>
<feature type="signal peptide" evidence="1">
    <location>
        <begin position="1"/>
        <end position="20"/>
    </location>
</feature>
<feature type="chain" id="PRO_5000397520" description="UPF0319 protein YccT">
    <location>
        <begin position="21"/>
        <end position="220"/>
    </location>
</feature>
<proteinExistence type="inferred from homology"/>
<accession>B5QZG7</accession>
<protein>
    <recommendedName>
        <fullName evidence="1">UPF0319 protein YccT</fullName>
    </recommendedName>
</protein>
<gene>
    <name evidence="1" type="primary">yccT</name>
    <name type="ordered locus">SEN0942</name>
</gene>
<name>YCCT_SALEP</name>
<dbReference type="EMBL" id="AM933172">
    <property type="protein sequence ID" value="CAR32525.1"/>
    <property type="molecule type" value="Genomic_DNA"/>
</dbReference>
<dbReference type="RefSeq" id="WP_000847719.1">
    <property type="nucleotide sequence ID" value="NC_011294.1"/>
</dbReference>
<dbReference type="KEGG" id="set:SEN0942"/>
<dbReference type="HOGENOM" id="CLU_073782_2_0_6"/>
<dbReference type="Proteomes" id="UP000000613">
    <property type="component" value="Chromosome"/>
</dbReference>
<dbReference type="HAMAP" id="MF_00789">
    <property type="entry name" value="UPF0319"/>
    <property type="match status" value="1"/>
</dbReference>
<dbReference type="InterPro" id="IPR018635">
    <property type="entry name" value="UPF0319"/>
</dbReference>
<dbReference type="NCBIfam" id="NF047712">
    <property type="entry name" value="CrliSynInhib"/>
    <property type="match status" value="1"/>
</dbReference>
<dbReference type="NCBIfam" id="NF002967">
    <property type="entry name" value="PRK03641.1"/>
    <property type="match status" value="1"/>
</dbReference>
<dbReference type="PANTHER" id="PTHR38108">
    <property type="entry name" value="UPF0319 PROTEIN YCCT"/>
    <property type="match status" value="1"/>
</dbReference>
<dbReference type="PANTHER" id="PTHR38108:SF1">
    <property type="entry name" value="UPF0319 PROTEIN YCCT"/>
    <property type="match status" value="1"/>
</dbReference>
<dbReference type="Pfam" id="PF09829">
    <property type="entry name" value="DUF2057"/>
    <property type="match status" value="1"/>
</dbReference>